<accession>Q9LBW5</accession>
<reference key="1">
    <citation type="journal article" date="2000" name="J. Bacteriol.">
        <title>A novel operon encoding formaldehyde fixation: the ribulose monophosphate pathway in the Gram-positive facultative methylotrophic bacterium Mycobacterium gastri MB19.</title>
        <authorList>
            <person name="Mitsui R."/>
            <person name="Sakai Y."/>
            <person name="Yasueda H."/>
            <person name="Kato N."/>
        </authorList>
    </citation>
    <scope>NUCLEOTIDE SEQUENCE [GENOMIC DNA]</scope>
    <scope>FUNCTION</scope>
    <scope>TRANSCRIPTIONAL REGULATION</scope>
    <source>
        <strain>MB19</strain>
    </source>
</reference>
<comment type="function">
    <text evidence="3">Catalyzes the isomerization between 3-hexulose 6-phosphate and fructose 6-phosphate.</text>
</comment>
<comment type="catalytic activity">
    <reaction>
        <text>D-arabino-hex-3-ulose 6-phosphate = beta-D-fructose 6-phosphate</text>
        <dbReference type="Rhea" id="RHEA:25900"/>
        <dbReference type="ChEBI" id="CHEBI:57634"/>
        <dbReference type="ChEBI" id="CHEBI:58542"/>
        <dbReference type="EC" id="5.3.1.27"/>
    </reaction>
</comment>
<comment type="pathway">
    <text>One-carbon metabolism; formaldehyde assimilation via RuMP pathway; D-fructose 6-phosphate from D-ribulose 5-phosphate and formaldehyde: step 2/2.</text>
</comment>
<comment type="induction">
    <text evidence="3">By methanol or methylamine.</text>
</comment>
<comment type="similarity">
    <text evidence="4">Belongs to the SIS family. PHI subfamily.</text>
</comment>
<keyword id="KW-0119">Carbohydrate metabolism</keyword>
<keyword id="KW-0413">Isomerase</keyword>
<proteinExistence type="evidence at transcript level"/>
<feature type="chain" id="PRO_0000235171" description="3-hexulose-6-phosphate isomerase">
    <location>
        <begin position="1"/>
        <end position="199"/>
    </location>
</feature>
<feature type="domain" description="SIS" evidence="2">
    <location>
        <begin position="44"/>
        <end position="186"/>
    </location>
</feature>
<feature type="active site" description="Proton acceptor" evidence="1">
    <location>
        <position position="166"/>
    </location>
</feature>
<feature type="binding site" evidence="1">
    <location>
        <position position="62"/>
    </location>
    <ligand>
        <name>substrate</name>
    </ligand>
</feature>
<feature type="binding site" evidence="1">
    <location>
        <begin position="101"/>
        <end position="106"/>
    </location>
    <ligand>
        <name>substrate</name>
    </ligand>
</feature>
<gene>
    <name type="primary">rmpB</name>
</gene>
<evidence type="ECO:0000255" key="1"/>
<evidence type="ECO:0000255" key="2">
    <source>
        <dbReference type="PROSITE-ProRule" id="PRU00797"/>
    </source>
</evidence>
<evidence type="ECO:0000269" key="3">
    <source>
    </source>
</evidence>
<evidence type="ECO:0000305" key="4"/>
<name>PHI_MYCGS</name>
<protein>
    <recommendedName>
        <fullName>3-hexulose-6-phosphate isomerase</fullName>
        <ecNumber>5.3.1.27</ecNumber>
    </recommendedName>
    <alternativeName>
        <fullName>6-phospho-3-hexuloisomerase</fullName>
        <shortName>PHI</shortName>
    </alternativeName>
</protein>
<sequence>MTQAAEADGAVKVVGDDITNNLSLVRDEVADTAAKVDPEQVAVLARQIVQPGRVFVAGAGRSGLVLRMAAMRLMHFGLTVHVAGDTTTPAISAGDLLLVASGSGTTSGVVKSAETAKKAGARIAAFTTNPDSPLAGLADAVVIIPAAQKTDHGSHISRQYAGSLFEQVLFVVTEAVFQSLWDHTEVEAEELWTRHANLE</sequence>
<organism>
    <name type="scientific">Mycobacterium gastri</name>
    <dbReference type="NCBI Taxonomy" id="1777"/>
    <lineage>
        <taxon>Bacteria</taxon>
        <taxon>Bacillati</taxon>
        <taxon>Actinomycetota</taxon>
        <taxon>Actinomycetes</taxon>
        <taxon>Mycobacteriales</taxon>
        <taxon>Mycobacteriaceae</taxon>
        <taxon>Mycobacterium</taxon>
    </lineage>
</organism>
<dbReference type="EC" id="5.3.1.27"/>
<dbReference type="EMBL" id="AB034913">
    <property type="protein sequence ID" value="BAA90545.1"/>
    <property type="molecule type" value="Genomic_DNA"/>
</dbReference>
<dbReference type="SMR" id="Q9LBW5"/>
<dbReference type="BRENDA" id="5.3.1.27">
    <property type="organism ID" value="10297"/>
</dbReference>
<dbReference type="UniPathway" id="UPA00294">
    <property type="reaction ID" value="UER00435"/>
</dbReference>
<dbReference type="GO" id="GO:0043800">
    <property type="term" value="F:6-phospho-3-hexuloisomerase activity"/>
    <property type="evidence" value="ECO:0007669"/>
    <property type="project" value="UniProtKB-EC"/>
</dbReference>
<dbReference type="GO" id="GO:0097367">
    <property type="term" value="F:carbohydrate derivative binding"/>
    <property type="evidence" value="ECO:0007669"/>
    <property type="project" value="InterPro"/>
</dbReference>
<dbReference type="GO" id="GO:1901135">
    <property type="term" value="P:carbohydrate derivative metabolic process"/>
    <property type="evidence" value="ECO:0007669"/>
    <property type="project" value="InterPro"/>
</dbReference>
<dbReference type="GO" id="GO:0019647">
    <property type="term" value="P:formaldehyde assimilation via ribulose monophosphate cycle"/>
    <property type="evidence" value="ECO:0007669"/>
    <property type="project" value="UniProtKB-UniPathway"/>
</dbReference>
<dbReference type="CDD" id="cd05005">
    <property type="entry name" value="SIS_PHI"/>
    <property type="match status" value="1"/>
</dbReference>
<dbReference type="Gene3D" id="3.40.50.10490">
    <property type="entry name" value="Glucose-6-phosphate isomerase like protein, domain 1"/>
    <property type="match status" value="1"/>
</dbReference>
<dbReference type="InterPro" id="IPR017552">
    <property type="entry name" value="PHI/rmpB"/>
</dbReference>
<dbReference type="InterPro" id="IPR001347">
    <property type="entry name" value="SIS_dom"/>
</dbReference>
<dbReference type="InterPro" id="IPR046348">
    <property type="entry name" value="SIS_dom_sf"/>
</dbReference>
<dbReference type="NCBIfam" id="TIGR03127">
    <property type="entry name" value="RuMP_HxlB"/>
    <property type="match status" value="1"/>
</dbReference>
<dbReference type="PANTHER" id="PTHR43443">
    <property type="entry name" value="3-HEXULOSE-6-PHOSPHATE ISOMERASE"/>
    <property type="match status" value="1"/>
</dbReference>
<dbReference type="PANTHER" id="PTHR43443:SF1">
    <property type="entry name" value="3-HEXULOSE-6-PHOSPHATE ISOMERASE"/>
    <property type="match status" value="1"/>
</dbReference>
<dbReference type="Pfam" id="PF01380">
    <property type="entry name" value="SIS"/>
    <property type="match status" value="1"/>
</dbReference>
<dbReference type="SUPFAM" id="SSF53697">
    <property type="entry name" value="SIS domain"/>
    <property type="match status" value="1"/>
</dbReference>
<dbReference type="PROSITE" id="PS51464">
    <property type="entry name" value="SIS"/>
    <property type="match status" value="1"/>
</dbReference>